<comment type="function">
    <text evidence="1">Binds to the 23S rRNA.</text>
</comment>
<comment type="similarity">
    <text evidence="1">Belongs to the bacterial ribosomal protein bL9 family.</text>
</comment>
<dbReference type="EMBL" id="CR925677">
    <property type="protein sequence ID" value="CAI28164.1"/>
    <property type="molecule type" value="Genomic_DNA"/>
</dbReference>
<dbReference type="RefSeq" id="WP_011155364.1">
    <property type="nucleotide sequence ID" value="NC_006831.1"/>
</dbReference>
<dbReference type="SMR" id="Q5FG29"/>
<dbReference type="GeneID" id="33057730"/>
<dbReference type="KEGG" id="erg:ERGA_CDS_07120"/>
<dbReference type="HOGENOM" id="CLU_078938_1_1_5"/>
<dbReference type="OrthoDB" id="9788336at2"/>
<dbReference type="Proteomes" id="UP000000533">
    <property type="component" value="Chromosome"/>
</dbReference>
<dbReference type="GO" id="GO:1990904">
    <property type="term" value="C:ribonucleoprotein complex"/>
    <property type="evidence" value="ECO:0007669"/>
    <property type="project" value="UniProtKB-KW"/>
</dbReference>
<dbReference type="GO" id="GO:0005840">
    <property type="term" value="C:ribosome"/>
    <property type="evidence" value="ECO:0007669"/>
    <property type="project" value="UniProtKB-KW"/>
</dbReference>
<dbReference type="GO" id="GO:0019843">
    <property type="term" value="F:rRNA binding"/>
    <property type="evidence" value="ECO:0007669"/>
    <property type="project" value="UniProtKB-UniRule"/>
</dbReference>
<dbReference type="GO" id="GO:0003735">
    <property type="term" value="F:structural constituent of ribosome"/>
    <property type="evidence" value="ECO:0007669"/>
    <property type="project" value="InterPro"/>
</dbReference>
<dbReference type="GO" id="GO:0006412">
    <property type="term" value="P:translation"/>
    <property type="evidence" value="ECO:0007669"/>
    <property type="project" value="UniProtKB-UniRule"/>
</dbReference>
<dbReference type="Gene3D" id="3.10.430.100">
    <property type="entry name" value="Ribosomal protein L9, C-terminal domain"/>
    <property type="match status" value="1"/>
</dbReference>
<dbReference type="Gene3D" id="3.40.5.10">
    <property type="entry name" value="Ribosomal protein L9, N-terminal domain"/>
    <property type="match status" value="1"/>
</dbReference>
<dbReference type="HAMAP" id="MF_00503">
    <property type="entry name" value="Ribosomal_bL9"/>
    <property type="match status" value="1"/>
</dbReference>
<dbReference type="InterPro" id="IPR000244">
    <property type="entry name" value="Ribosomal_bL9"/>
</dbReference>
<dbReference type="InterPro" id="IPR009027">
    <property type="entry name" value="Ribosomal_bL9/RNase_H1_N"/>
</dbReference>
<dbReference type="InterPro" id="IPR020594">
    <property type="entry name" value="Ribosomal_bL9_bac/chp"/>
</dbReference>
<dbReference type="InterPro" id="IPR020069">
    <property type="entry name" value="Ribosomal_bL9_C"/>
</dbReference>
<dbReference type="InterPro" id="IPR036791">
    <property type="entry name" value="Ribosomal_bL9_C_sf"/>
</dbReference>
<dbReference type="InterPro" id="IPR020070">
    <property type="entry name" value="Ribosomal_bL9_N"/>
</dbReference>
<dbReference type="InterPro" id="IPR036935">
    <property type="entry name" value="Ribosomal_bL9_N_sf"/>
</dbReference>
<dbReference type="NCBIfam" id="TIGR00158">
    <property type="entry name" value="L9"/>
    <property type="match status" value="1"/>
</dbReference>
<dbReference type="PANTHER" id="PTHR21368">
    <property type="entry name" value="50S RIBOSOMAL PROTEIN L9"/>
    <property type="match status" value="1"/>
</dbReference>
<dbReference type="Pfam" id="PF03948">
    <property type="entry name" value="Ribosomal_L9_C"/>
    <property type="match status" value="1"/>
</dbReference>
<dbReference type="Pfam" id="PF01281">
    <property type="entry name" value="Ribosomal_L9_N"/>
    <property type="match status" value="1"/>
</dbReference>
<dbReference type="SUPFAM" id="SSF55658">
    <property type="entry name" value="L9 N-domain-like"/>
    <property type="match status" value="1"/>
</dbReference>
<dbReference type="SUPFAM" id="SSF55653">
    <property type="entry name" value="Ribosomal protein L9 C-domain"/>
    <property type="match status" value="1"/>
</dbReference>
<organism>
    <name type="scientific">Ehrlichia ruminantium (strain Gardel)</name>
    <dbReference type="NCBI Taxonomy" id="302409"/>
    <lineage>
        <taxon>Bacteria</taxon>
        <taxon>Pseudomonadati</taxon>
        <taxon>Pseudomonadota</taxon>
        <taxon>Alphaproteobacteria</taxon>
        <taxon>Rickettsiales</taxon>
        <taxon>Anaplasmataceae</taxon>
        <taxon>Ehrlichia</taxon>
    </lineage>
</organism>
<name>RL9_EHRRG</name>
<keyword id="KW-0687">Ribonucleoprotein</keyword>
<keyword id="KW-0689">Ribosomal protein</keyword>
<keyword id="KW-0694">RNA-binding</keyword>
<keyword id="KW-0699">rRNA-binding</keyword>
<sequence>MLSVILKESVRNLGKAGVVTKVKPGYARYLLAQKKAVRATKENLKILEEQHISIQQENLEKLEAAKALQVSLKDEFLIIIRQAADDGKLFGSVTPKCISKLLSDKGYNIHYHNIFFHSVIKYIGEYVVNLELHHDLVVPMMLYVVKNDLGAMQAQKLHLDKQKKEEKAKDEVSATEKDEELMLSSVTNDNDGDGAKEIVVEGTEESQ</sequence>
<evidence type="ECO:0000255" key="1">
    <source>
        <dbReference type="HAMAP-Rule" id="MF_00503"/>
    </source>
</evidence>
<evidence type="ECO:0000256" key="2">
    <source>
        <dbReference type="SAM" id="MobiDB-lite"/>
    </source>
</evidence>
<evidence type="ECO:0000305" key="3"/>
<gene>
    <name evidence="1" type="primary">rplI</name>
    <name type="ordered locus">ERGA_CDS_07120</name>
</gene>
<protein>
    <recommendedName>
        <fullName evidence="1">Large ribosomal subunit protein bL9</fullName>
    </recommendedName>
    <alternativeName>
        <fullName evidence="3">50S ribosomal protein L9</fullName>
    </alternativeName>
</protein>
<accession>Q5FG29</accession>
<proteinExistence type="inferred from homology"/>
<feature type="chain" id="PRO_0000258455" description="Large ribosomal subunit protein bL9">
    <location>
        <begin position="1"/>
        <end position="207"/>
    </location>
</feature>
<feature type="region of interest" description="Disordered" evidence="2">
    <location>
        <begin position="162"/>
        <end position="207"/>
    </location>
</feature>
<feature type="compositionally biased region" description="Basic and acidic residues" evidence="2">
    <location>
        <begin position="162"/>
        <end position="176"/>
    </location>
</feature>
<reference key="1">
    <citation type="journal article" date="2006" name="J. Bacteriol.">
        <title>Comparative genomic analysis of three strains of Ehrlichia ruminantium reveals an active process of genome size plasticity.</title>
        <authorList>
            <person name="Frutos R."/>
            <person name="Viari A."/>
            <person name="Ferraz C."/>
            <person name="Morgat A."/>
            <person name="Eychenie S."/>
            <person name="Kandassamy Y."/>
            <person name="Chantal I."/>
            <person name="Bensaid A."/>
            <person name="Coissac E."/>
            <person name="Vachiery N."/>
            <person name="Demaille J."/>
            <person name="Martinez D."/>
        </authorList>
    </citation>
    <scope>NUCLEOTIDE SEQUENCE [LARGE SCALE GENOMIC DNA]</scope>
    <source>
        <strain>Gardel</strain>
    </source>
</reference>